<dbReference type="EC" id="3.4.21.90" evidence="29"/>
<dbReference type="EMBL" id="Z48163">
    <property type="protein sequence ID" value="CAD90834.1"/>
    <property type="molecule type" value="Genomic_RNA"/>
</dbReference>
<dbReference type="EMBL" id="EU350586">
    <property type="protein sequence ID" value="ACB12688.1"/>
    <property type="molecule type" value="Genomic_RNA"/>
</dbReference>
<dbReference type="EMBL" id="AY112987">
    <property type="protein sequence ID" value="AAM64227.1"/>
    <property type="molecule type" value="Genomic_RNA"/>
</dbReference>
<dbReference type="EMBL" id="X04129">
    <property type="protein sequence ID" value="CAA27742.1"/>
    <property type="molecule type" value="Genomic_RNA"/>
</dbReference>
<dbReference type="PIR" id="A93861">
    <property type="entry name" value="VHWV"/>
</dbReference>
<dbReference type="PIR" id="S42462">
    <property type="entry name" value="S42462"/>
</dbReference>
<dbReference type="RefSeq" id="NP_463458.1">
    <molecule id="P03315-1"/>
    <property type="nucleotide sequence ID" value="NC_003215.1"/>
</dbReference>
<dbReference type="PDB" id="1DYL">
    <property type="method" value="EM"/>
    <property type="resolution" value="9.00 A"/>
    <property type="chains" value="A/B/C/D=119-267"/>
</dbReference>
<dbReference type="PDB" id="1I9W">
    <property type="method" value="X-ray"/>
    <property type="resolution" value="3.00 A"/>
    <property type="chains" value="A=816-1205"/>
</dbReference>
<dbReference type="PDB" id="1RER">
    <property type="method" value="X-ray"/>
    <property type="resolution" value="3.20 A"/>
    <property type="chains" value="A/B/C=816-1206"/>
</dbReference>
<dbReference type="PDB" id="1VCP">
    <property type="method" value="X-ray"/>
    <property type="resolution" value="3.00 A"/>
    <property type="chains" value="A/B/C=119-267"/>
</dbReference>
<dbReference type="PDB" id="1VCQ">
    <property type="method" value="X-ray"/>
    <property type="resolution" value="3.10 A"/>
    <property type="chains" value="A/B=119-267"/>
</dbReference>
<dbReference type="PDB" id="2ALA">
    <property type="method" value="X-ray"/>
    <property type="resolution" value="3.00 A"/>
    <property type="chains" value="A=816-1206"/>
</dbReference>
<dbReference type="PDB" id="2V33">
    <property type="method" value="X-ray"/>
    <property type="resolution" value="1.55 A"/>
    <property type="chains" value="A/B=1107-1197"/>
</dbReference>
<dbReference type="PDB" id="8D87">
    <property type="method" value="EM"/>
    <property type="resolution" value="3.20 A"/>
    <property type="chains" value="A/B/C=816-1206"/>
</dbReference>
<dbReference type="PDB" id="8IHP">
    <property type="method" value="EM"/>
    <property type="resolution" value="3.00 A"/>
    <property type="chains" value="A/D/G/J=334-755, B/E/H/K=816-1253, C/F/I/L=106-267"/>
</dbReference>
<dbReference type="PDB" id="8UA8">
    <property type="method" value="EM"/>
    <property type="resolution" value="3.70 A"/>
    <property type="chains" value="A/E/I/M=816-1253, B/F/J/N=339-755, C/G/K=275-325, D/H/L/P=116-267, O=273-325"/>
</dbReference>
<dbReference type="PDB" id="8X0K">
    <property type="method" value="EM"/>
    <property type="resolution" value="3.50 A"/>
    <property type="chains" value="A/E/I/M=106-267, B/F/J/N=334-751, C/G/K/O=816-1253"/>
</dbReference>
<dbReference type="PDB" id="8X0L">
    <property type="method" value="EM"/>
    <property type="resolution" value="3.50 A"/>
    <property type="chains" value="A/E/I=106-267, B/F/J=334-751, C/G/K=816-1253"/>
</dbReference>
<dbReference type="PDB" id="8X0M">
    <property type="method" value="EM"/>
    <property type="resolution" value="3.50 A"/>
    <property type="chains" value="A/E/I=106-267, B/F/J=334-751, C/G/K=816-1253"/>
</dbReference>
<dbReference type="PDBsum" id="1DYL"/>
<dbReference type="PDBsum" id="1I9W"/>
<dbReference type="PDBsum" id="1RER"/>
<dbReference type="PDBsum" id="1VCP"/>
<dbReference type="PDBsum" id="1VCQ"/>
<dbReference type="PDBsum" id="2ALA"/>
<dbReference type="PDBsum" id="2V33"/>
<dbReference type="PDBsum" id="8D87"/>
<dbReference type="PDBsum" id="8IHP"/>
<dbReference type="PDBsum" id="8UA8"/>
<dbReference type="PDBsum" id="8X0K"/>
<dbReference type="PDBsum" id="8X0L"/>
<dbReference type="PDBsum" id="8X0M"/>
<dbReference type="EMDB" id="EMD-27248"/>
<dbReference type="EMDB" id="EMD-35451"/>
<dbReference type="EMDB" id="EMD-37980"/>
<dbReference type="EMDB" id="EMD-37981"/>
<dbReference type="EMDB" id="EMD-37982"/>
<dbReference type="EMDB" id="EMD-42054"/>
<dbReference type="SMR" id="P03315"/>
<dbReference type="MEROPS" id="C09.001"/>
<dbReference type="MEROPS" id="S03.001"/>
<dbReference type="TCDB" id="1.G.4.1.1">
    <property type="family name" value="the viral pore-forming membrane fusion protein-4 (vmfp4) family"/>
</dbReference>
<dbReference type="GlyConnect" id="575">
    <property type="glycosylation" value="2 N-Linked glycans"/>
</dbReference>
<dbReference type="GlyConnect" id="576">
    <property type="glycosylation" value="2 N-Linked glycans"/>
</dbReference>
<dbReference type="GlyConnect" id="577">
    <property type="glycosylation" value="1 N-Linked glycan"/>
</dbReference>
<dbReference type="iPTMnet" id="P03315"/>
<dbReference type="SwissPalm" id="P03315"/>
<dbReference type="GeneID" id="922351"/>
<dbReference type="KEGG" id="vg:922351"/>
<dbReference type="EvolutionaryTrace" id="P03315"/>
<dbReference type="Proteomes" id="UP000000570">
    <property type="component" value="Genome"/>
</dbReference>
<dbReference type="Proteomes" id="UP000108382">
    <property type="component" value="Genome"/>
</dbReference>
<dbReference type="Proteomes" id="UP000125835">
    <property type="component" value="Genome"/>
</dbReference>
<dbReference type="Proteomes" id="UP000174511">
    <property type="component" value="Genome"/>
</dbReference>
<dbReference type="GO" id="GO:0044174">
    <property type="term" value="C:host cell endosome"/>
    <property type="evidence" value="ECO:0000314"/>
    <property type="project" value="CACAO"/>
</dbReference>
<dbReference type="GO" id="GO:0042025">
    <property type="term" value="C:host cell nucleus"/>
    <property type="evidence" value="ECO:0007669"/>
    <property type="project" value="UniProtKB-SubCell"/>
</dbReference>
<dbReference type="GO" id="GO:0020002">
    <property type="term" value="C:host cell plasma membrane"/>
    <property type="evidence" value="ECO:0007669"/>
    <property type="project" value="UniProtKB-SubCell"/>
</dbReference>
<dbReference type="GO" id="GO:0016020">
    <property type="term" value="C:membrane"/>
    <property type="evidence" value="ECO:0007669"/>
    <property type="project" value="UniProtKB-KW"/>
</dbReference>
<dbReference type="GO" id="GO:0039619">
    <property type="term" value="C:T=4 icosahedral viral capsid"/>
    <property type="evidence" value="ECO:0007669"/>
    <property type="project" value="UniProtKB-KW"/>
</dbReference>
<dbReference type="GO" id="GO:0019031">
    <property type="term" value="C:viral envelope"/>
    <property type="evidence" value="ECO:0007669"/>
    <property type="project" value="UniProtKB-KW"/>
</dbReference>
<dbReference type="GO" id="GO:0055036">
    <property type="term" value="C:virion membrane"/>
    <property type="evidence" value="ECO:0007669"/>
    <property type="project" value="UniProtKB-SubCell"/>
</dbReference>
<dbReference type="GO" id="GO:0003723">
    <property type="term" value="F:RNA binding"/>
    <property type="evidence" value="ECO:0007669"/>
    <property type="project" value="UniProtKB-KW"/>
</dbReference>
<dbReference type="GO" id="GO:0004252">
    <property type="term" value="F:serine-type endopeptidase activity"/>
    <property type="evidence" value="ECO:0007669"/>
    <property type="project" value="InterPro"/>
</dbReference>
<dbReference type="GO" id="GO:0036094">
    <property type="term" value="F:small molecule binding"/>
    <property type="evidence" value="ECO:0000269"/>
    <property type="project" value="DisProt"/>
</dbReference>
<dbReference type="GO" id="GO:0005198">
    <property type="term" value="F:structural molecule activity"/>
    <property type="evidence" value="ECO:0007669"/>
    <property type="project" value="InterPro"/>
</dbReference>
<dbReference type="GO" id="GO:0075512">
    <property type="term" value="P:clathrin-dependent endocytosis of virus by host cell"/>
    <property type="evidence" value="ECO:0007669"/>
    <property type="project" value="UniProtKB-KW"/>
</dbReference>
<dbReference type="GO" id="GO:0039654">
    <property type="term" value="P:fusion of virus membrane with host endosome membrane"/>
    <property type="evidence" value="ECO:0007669"/>
    <property type="project" value="UniProtKB-KW"/>
</dbReference>
<dbReference type="GO" id="GO:0006508">
    <property type="term" value="P:proteolysis"/>
    <property type="evidence" value="ECO:0007669"/>
    <property type="project" value="UniProtKB-KW"/>
</dbReference>
<dbReference type="GO" id="GO:0039722">
    <property type="term" value="P:symbiont-mediated suppression of host toll-like receptor signaling pathway"/>
    <property type="evidence" value="ECO:0000250"/>
    <property type="project" value="UniProtKB"/>
</dbReference>
<dbReference type="GO" id="GO:0075523">
    <property type="term" value="P:viral translational frameshifting"/>
    <property type="evidence" value="ECO:0007669"/>
    <property type="project" value="UniProtKB-KW"/>
</dbReference>
<dbReference type="GO" id="GO:0019068">
    <property type="term" value="P:virion assembly"/>
    <property type="evidence" value="ECO:0000315"/>
    <property type="project" value="CACAO"/>
</dbReference>
<dbReference type="GO" id="GO:0019062">
    <property type="term" value="P:virion attachment to host cell"/>
    <property type="evidence" value="ECO:0007669"/>
    <property type="project" value="UniProtKB-KW"/>
</dbReference>
<dbReference type="DisProt" id="DP00999"/>
<dbReference type="FunFam" id="1.10.287.2230:FF:000001">
    <property type="entry name" value="Structural polyprotein"/>
    <property type="match status" value="1"/>
</dbReference>
<dbReference type="FunFam" id="2.40.10.10:FF:000075">
    <property type="entry name" value="Structural polyprotein"/>
    <property type="match status" value="1"/>
</dbReference>
<dbReference type="FunFam" id="2.40.10.10:FF:000076">
    <property type="entry name" value="Structural polyprotein"/>
    <property type="match status" value="1"/>
</dbReference>
<dbReference type="FunFam" id="2.60.98.10:FF:000002">
    <property type="entry name" value="Structural polyprotein"/>
    <property type="match status" value="1"/>
</dbReference>
<dbReference type="FunFam" id="2.60.98.10:FF:000003">
    <property type="entry name" value="Structural polyprotein"/>
    <property type="match status" value="1"/>
</dbReference>
<dbReference type="FunFam" id="2.60.98.10:FF:000004">
    <property type="entry name" value="Structural polyprotein"/>
    <property type="match status" value="1"/>
</dbReference>
<dbReference type="Gene3D" id="1.10.287.2230">
    <property type="match status" value="1"/>
</dbReference>
<dbReference type="Gene3D" id="2.60.40.350">
    <property type="match status" value="1"/>
</dbReference>
<dbReference type="Gene3D" id="2.60.40.3200">
    <property type="entry name" value="Alphavirus E2 glycoprotein, A domain"/>
    <property type="match status" value="1"/>
</dbReference>
<dbReference type="Gene3D" id="2.60.40.4310">
    <property type="entry name" value="Alphavirus E2 glycoprotein, domain B"/>
    <property type="match status" value="1"/>
</dbReference>
<dbReference type="Gene3D" id="2.60.40.2400">
    <property type="entry name" value="Alphavirus E2 glycoprotein, domain C"/>
    <property type="match status" value="1"/>
</dbReference>
<dbReference type="Gene3D" id="2.60.98.10">
    <property type="entry name" value="Tick-borne Encephalitis virus Glycoprotein, domain 1"/>
    <property type="match status" value="3"/>
</dbReference>
<dbReference type="Gene3D" id="2.40.10.10">
    <property type="entry name" value="Trypsin-like serine proteases"/>
    <property type="match status" value="2"/>
</dbReference>
<dbReference type="InterPro" id="IPR002548">
    <property type="entry name" value="Alpha_E1_glycop"/>
</dbReference>
<dbReference type="InterPro" id="IPR000936">
    <property type="entry name" value="Alpha_E2_glycop"/>
</dbReference>
<dbReference type="InterPro" id="IPR002533">
    <property type="entry name" value="Alpha_E3_glycop"/>
</dbReference>
<dbReference type="InterPro" id="IPR042304">
    <property type="entry name" value="Alphavir_E2_A"/>
</dbReference>
<dbReference type="InterPro" id="IPR042305">
    <property type="entry name" value="Alphavir_E2_B"/>
</dbReference>
<dbReference type="InterPro" id="IPR042306">
    <property type="entry name" value="Alphavir_E2_C"/>
</dbReference>
<dbReference type="InterPro" id="IPR000336">
    <property type="entry name" value="Flavivir/Alphavir_Ig-like_sf"/>
</dbReference>
<dbReference type="InterPro" id="IPR036253">
    <property type="entry name" value="Glycoprot_cen/dimer_sf"/>
</dbReference>
<dbReference type="InterPro" id="IPR038055">
    <property type="entry name" value="Glycoprot_E_dimer_dom"/>
</dbReference>
<dbReference type="InterPro" id="IPR014756">
    <property type="entry name" value="Ig_E-set"/>
</dbReference>
<dbReference type="InterPro" id="IPR009003">
    <property type="entry name" value="Peptidase_S1_PA"/>
</dbReference>
<dbReference type="InterPro" id="IPR043504">
    <property type="entry name" value="Peptidase_S1_PA_chymotrypsin"/>
</dbReference>
<dbReference type="InterPro" id="IPR000930">
    <property type="entry name" value="Peptidase_S3"/>
</dbReference>
<dbReference type="Pfam" id="PF01589">
    <property type="entry name" value="Alpha_E1_glycop"/>
    <property type="match status" value="1"/>
</dbReference>
<dbReference type="Pfam" id="PF00943">
    <property type="entry name" value="Alpha_E2_glycop"/>
    <property type="match status" value="1"/>
</dbReference>
<dbReference type="Pfam" id="PF01563">
    <property type="entry name" value="Alpha_E3_glycop"/>
    <property type="match status" value="1"/>
</dbReference>
<dbReference type="Pfam" id="PF00944">
    <property type="entry name" value="Peptidase_S3"/>
    <property type="match status" value="1"/>
</dbReference>
<dbReference type="PRINTS" id="PR00798">
    <property type="entry name" value="TOGAVIRIN"/>
</dbReference>
<dbReference type="SUPFAM" id="SSF81296">
    <property type="entry name" value="E set domains"/>
    <property type="match status" value="1"/>
</dbReference>
<dbReference type="SUPFAM" id="SSF50494">
    <property type="entry name" value="Trypsin-like serine proteases"/>
    <property type="match status" value="1"/>
</dbReference>
<dbReference type="SUPFAM" id="SSF56983">
    <property type="entry name" value="Viral glycoprotein, central and dimerisation domains"/>
    <property type="match status" value="1"/>
</dbReference>
<dbReference type="PROSITE" id="PS51690">
    <property type="entry name" value="ALPHAVIRUS_CP"/>
    <property type="match status" value="1"/>
</dbReference>
<evidence type="ECO:0000250" key="1">
    <source>
        <dbReference type="UniProtKB" id="P03316"/>
    </source>
</evidence>
<evidence type="ECO:0000250" key="2">
    <source>
        <dbReference type="UniProtKB" id="P09592"/>
    </source>
</evidence>
<evidence type="ECO:0000250" key="3">
    <source>
        <dbReference type="UniProtKB" id="P0DOK1"/>
    </source>
</evidence>
<evidence type="ECO:0000250" key="4">
    <source>
        <dbReference type="UniProtKB" id="P27284"/>
    </source>
</evidence>
<evidence type="ECO:0000250" key="5">
    <source>
        <dbReference type="UniProtKB" id="P89946"/>
    </source>
</evidence>
<evidence type="ECO:0000250" key="6">
    <source>
        <dbReference type="UniProtKB" id="Q5XXP3"/>
    </source>
</evidence>
<evidence type="ECO:0000250" key="7">
    <source>
        <dbReference type="UniProtKB" id="Q5Y388"/>
    </source>
</evidence>
<evidence type="ECO:0000250" key="8">
    <source>
        <dbReference type="UniProtKB" id="Q86925"/>
    </source>
</evidence>
<evidence type="ECO:0000250" key="9">
    <source>
        <dbReference type="UniProtKB" id="Q8JUX5"/>
    </source>
</evidence>
<evidence type="ECO:0000255" key="10"/>
<evidence type="ECO:0000255" key="11">
    <source>
        <dbReference type="PROSITE-ProRule" id="PRU01027"/>
    </source>
</evidence>
<evidence type="ECO:0000256" key="12">
    <source>
        <dbReference type="SAM" id="MobiDB-lite"/>
    </source>
</evidence>
<evidence type="ECO:0000269" key="13">
    <source>
    </source>
</evidence>
<evidence type="ECO:0000269" key="14">
    <source>
    </source>
</evidence>
<evidence type="ECO:0000269" key="15">
    <source>
    </source>
</evidence>
<evidence type="ECO:0000269" key="16">
    <source>
    </source>
</evidence>
<evidence type="ECO:0000269" key="17">
    <source>
    </source>
</evidence>
<evidence type="ECO:0000269" key="18">
    <source>
    </source>
</evidence>
<evidence type="ECO:0000269" key="19">
    <source>
    </source>
</evidence>
<evidence type="ECO:0000269" key="20">
    <source>
    </source>
</evidence>
<evidence type="ECO:0000269" key="21">
    <source>
    </source>
</evidence>
<evidence type="ECO:0000269" key="22">
    <source>
    </source>
</evidence>
<evidence type="ECO:0000269" key="23">
    <source>
    </source>
</evidence>
<evidence type="ECO:0000269" key="24">
    <source>
    </source>
</evidence>
<evidence type="ECO:0000269" key="25">
    <source>
    </source>
</evidence>
<evidence type="ECO:0000269" key="26">
    <source>
    </source>
</evidence>
<evidence type="ECO:0000269" key="27">
    <source>
    </source>
</evidence>
<evidence type="ECO:0000269" key="28">
    <source>
    </source>
</evidence>
<evidence type="ECO:0000269" key="29">
    <source>
    </source>
</evidence>
<evidence type="ECO:0000269" key="30">
    <source>
    </source>
</evidence>
<evidence type="ECO:0000269" key="31">
    <source>
    </source>
</evidence>
<evidence type="ECO:0000269" key="32">
    <source>
    </source>
</evidence>
<evidence type="ECO:0000269" key="33">
    <source>
    </source>
</evidence>
<evidence type="ECO:0000269" key="34">
    <source>
    </source>
</evidence>
<evidence type="ECO:0000269" key="35">
    <source>
    </source>
</evidence>
<evidence type="ECO:0000269" key="36">
    <source>
    </source>
</evidence>
<evidence type="ECO:0000269" key="37">
    <source>
    </source>
</evidence>
<evidence type="ECO:0000305" key="38"/>
<evidence type="ECO:0007744" key="39">
    <source>
        <dbReference type="PDB" id="2ALA"/>
    </source>
</evidence>
<evidence type="ECO:0007744" key="40">
    <source>
        <dbReference type="PDB" id="8D87"/>
    </source>
</evidence>
<evidence type="ECO:0007744" key="41">
    <source>
        <dbReference type="PDB" id="8IHP"/>
    </source>
</evidence>
<evidence type="ECO:0007744" key="42">
    <source>
        <dbReference type="PDB" id="8UA8"/>
    </source>
</evidence>
<evidence type="ECO:0007829" key="43">
    <source>
        <dbReference type="PDB" id="1RER"/>
    </source>
</evidence>
<evidence type="ECO:0007829" key="44">
    <source>
        <dbReference type="PDB" id="1VCP"/>
    </source>
</evidence>
<evidence type="ECO:0007829" key="45">
    <source>
        <dbReference type="PDB" id="2ALA"/>
    </source>
</evidence>
<evidence type="ECO:0007829" key="46">
    <source>
        <dbReference type="PDB" id="2V33"/>
    </source>
</evidence>
<evidence type="ECO:0007829" key="47">
    <source>
        <dbReference type="PDB" id="8X0K"/>
    </source>
</evidence>
<evidence type="ECO:0007829" key="48">
    <source>
        <dbReference type="PDB" id="8X0M"/>
    </source>
</evidence>
<keyword id="KW-0002">3D-structure</keyword>
<keyword id="KW-0068">Autocatalytic cleavage</keyword>
<keyword id="KW-0167">Capsid protein</keyword>
<keyword id="KW-1165">Clathrin-mediated endocytosis of virus by host</keyword>
<keyword id="KW-0165">Cleavage on pair of basic residues</keyword>
<keyword id="KW-0903">Direct protein sequencing</keyword>
<keyword id="KW-1015">Disulfide bond</keyword>
<keyword id="KW-1170">Fusion of virus membrane with host endosomal membrane</keyword>
<keyword id="KW-1168">Fusion of virus membrane with host membrane</keyword>
<keyword id="KW-0325">Glycoprotein</keyword>
<keyword id="KW-1032">Host cell membrane</keyword>
<keyword id="KW-1035">Host cytoplasm</keyword>
<keyword id="KW-1038">Host endoplasmic reticulum</keyword>
<keyword id="KW-1040">Host Golgi apparatus</keyword>
<keyword id="KW-1043">Host membrane</keyword>
<keyword id="KW-1048">Host nucleus</keyword>
<keyword id="KW-0945">Host-virus interaction</keyword>
<keyword id="KW-0378">Hydrolase</keyword>
<keyword id="KW-0407">Ion channel</keyword>
<keyword id="KW-0406">Ion transport</keyword>
<keyword id="KW-0449">Lipoprotein</keyword>
<keyword id="KW-0472">Membrane</keyword>
<keyword id="KW-0564">Palmitate</keyword>
<keyword id="KW-0645">Protease</keyword>
<keyword id="KW-1185">Reference proteome</keyword>
<keyword id="KW-0688">Ribosomal frameshifting</keyword>
<keyword id="KW-0694">RNA-binding</keyword>
<keyword id="KW-0720">Serine protease</keyword>
<keyword id="KW-1144">T=4 icosahedral capsid protein</keyword>
<keyword id="KW-0812">Transmembrane</keyword>
<keyword id="KW-1133">Transmembrane helix</keyword>
<keyword id="KW-0813">Transport</keyword>
<keyword id="KW-1161">Viral attachment to host cell</keyword>
<keyword id="KW-1234">Viral attachment to host entry receptor</keyword>
<keyword id="KW-0261">Viral envelope protein</keyword>
<keyword id="KW-1182">Viral ion channel</keyword>
<keyword id="KW-1162">Viral penetration into host cytoplasm</keyword>
<keyword id="KW-0946">Virion</keyword>
<keyword id="KW-1164">Virus endocytosis by host</keyword>
<keyword id="KW-1160">Virus entry into host cell</keyword>
<comment type="function">
    <molecule>Capsid protein</molecule>
    <text evidence="1 4 15 18 19 29 33 37">Forms an icosahedral capsid with a T=4 symmetry composed of 240 copies of the capsid protein surrounded by a lipid membrane through which penetrate 80 spikes composed of trimers of E1-E2 heterodimers (PubMed:16407067). The capsid protein binds to the viral RNA genome at a site adjacent to a ribosome binding site for viral genome translation following genome release (By similarity). Possesses a protease activity that results in its autocatalytic cleavage from the nascent structural protein (PubMed:3553612, PubMed:9642067). Following its self-cleavage, the capsid protein transiently associates with ribosomes, and within several minutes the protein binds to viral RNA and rapidly assembles into icosahedric core particles (PubMed:516447). The resulting nucleocapsid eventually associates with the cytoplasmic domain of the spike glycoprotein E2 at the cell membrane, leading to budding and formation of mature virions (By similarity). In case of infection, new virions attach to target cells and after clathrin-mediated endocytosis their membrane fuses with the host endosomal membrane (PubMed:15954801). This leads to the release of the nucleocapsid into the cytoplasm, followed by an uncoating event necessary for the genomic RNA to become accessible (PubMed:1433506). The uncoating might be triggered by the interaction of capsid proteins with ribosomes (PubMed:1433506). Binding of ribosomes would release the genomic RNA since the same region is genomic RNA-binding and ribosome-binding (PubMed:1433506). Specifically inhibits interleukin-1 receptor-associated kinase 1/IRAK1-dependent signaling during viral entry, representing a means by which the alphaviruses may evade innate immune detection and activation prior to viral gene expression (By similarity).</text>
</comment>
<comment type="function">
    <molecule>Assembly protein E3</molecule>
    <text evidence="25 26">Provides the signal sequence for the translocation of the precursor of protein E3/E2 to the host endoplasmic reticulum. Furin-cleaved E3 remains associated with spike glycoprotein E1 and mediates pH protection of the latter during the transport via the secretory pathway. After virion release from the host cell, the assembly protein E3 is gradually released in the extracellular space.</text>
</comment>
<comment type="function">
    <molecule>Spike glycoprotein E2</molecule>
    <text evidence="20">Plays a role in viral attachment to target host cell, by binding to the cell receptors VLDLR or LRP8/APOER2 (PubMed:34929721). The host LDLR can act as a cell receptor for viral entry (PubMed:38245515). Synthesized as a p62 precursor which is processed by furin at the cell membrane just before virion budding, giving rise to E2-E1 heterodimer. The p62-E1 heterodimer is stable, whereas E2-E1 is unstable and dissociate at low pH. p62 is processed at the last step, presumably to avoid E1 fusion activation before its final export to cell surface. E2 C-terminus contains a transitory transmembrane that would be disrupted by palmitoylation, resulting in reorientation of the C-terminal tail from lumenal to cytoplasmic side. This step is critical since E2 C-terminus is involved in budding by interacting with capsid proteins. This release of E2 C-terminus in cytoplasm occurs lately in protein export, and precludes premature assembly of particles at the endoplasmic reticulum membrane.</text>
</comment>
<comment type="function">
    <molecule>6K protein</molecule>
    <text evidence="1 21 35">Acts as a viroporin that participates in virus glycoprotein processing and transport to the plasma membrane, cell permeabilization and budding of viral particles (PubMed:7983743). Disrupts the calcium homeostasis of the cell, probably at the endoplasmic reticulum level (By similarity). This leads to cytoplasmic calcium elevation (By similarity). Because of its lipophilic properties, the 6K protein is postulated to influence the selection of lipids that interact with the transmembrane domains of the glycoproteins, which, in turn, affects the deformability of the bilayer required for the extreme curvature that occurs as budding proceeds. Present in low amount in virions, about 3% compared to viral glycoproteins (PubMed:1962454).</text>
</comment>
<comment type="function">
    <molecule>Spike glycoprotein E1</molecule>
    <text evidence="13 16 28 30">Class II viral fusion protein (PubMed:1433520, PubMed:34929721, PubMed:35970990). Fusion activity is inactive as long as E1 is bound to E2 in mature virion (PubMed:1433520, PubMed:34929721). After virus attachment to target cell via host VLDLR or LRP8/APOER2 and endocytosis, acidification of the endosome induces dissociation of E1/E2 heterodimer and concomitant trimerization of the E1 subunits (PubMed:1433520, PubMed:34929721). This E1 trimer is fusion active, and promotes release of viral nucleocapsid in cytoplasm after endosome and viral membrane fusion (PubMed:1433520). Efficient fusion requires the presence of cholesterol and sphingolipid in the target membrane (PubMed:12438597). Fusion is optimal at levels of about 1 molecule of cholesterol per 2 molecules of phospholipids, and is specific for sterols containing a 3-beta-hydroxyl group (PubMed:12438597).</text>
</comment>
<comment type="catalytic activity">
    <reaction evidence="29">
        <text>Autocatalytic release of the core protein from the N-terminus of the togavirus structural polyprotein by hydrolysis of a -Trp-|-Ser- bond.</text>
        <dbReference type="EC" id="3.4.21.90"/>
    </reaction>
</comment>
<comment type="subunit">
    <molecule>Capsid protein</molecule>
    <text evidence="1 8 9">Homodimer (By similarity). Homomultimer (By similarity). Interacts with host karyopherin KPNA4; this interaction allows the nuclear import of the viral capsid protein (By similarity). Interacts with spike glycoprotein E2 (By similarity). Interacts with host IRAK1; the interaction leads to inhibition of IRAK1-dependent signaling (By similarity).</text>
</comment>
<comment type="subunit">
    <molecule>Precursor of protein E3/E2</molecule>
    <text evidence="1 3 9">The precursor of protein E3/E2 and E1 form a heterodimer shortly after synthesis (By similarity).</text>
</comment>
<comment type="subunit">
    <molecule>Spike glycoprotein E1</molecule>
    <text evidence="1 16 17 19 28 31 32">The precursor of protein E3/E2 and E1 form a heterodimer shortly after synthesis (By similarity). Processing of the precursor of protein E3/E2 into E2 and E3 results in a heterodimer of the spike glycoproteins E2 and E1 (By similarity). Spike at virion surface are constituted of a trimer of E2-E1 heterodimers (PubMed:16407067). E2-E1 heterodimers interact with host VLDLR or LRP8/APOER2 to mediate viral entry (PubMed:34929721). After target cell attachment and endocytosis, E1 change conformation to form homotrimers (PubMed:1433520, PubMed:14737160, PubMed:16407067). Interacts with 6K protein (By similarity). Interacts (via E1-DIII) with host VLDLR (via class A repeats); this interaction mediates viral entry into host cell (PubMed:37098345, PubMed:39095394).</text>
</comment>
<comment type="subunit">
    <molecule>Spike glycoprotein E2</molecule>
    <text evidence="1 19 28">Interacts with spike glycoprotein E1 (By similarity). Processing of the precursor of protein E3/E2 into E2 and E3 results in a heterodimer of the spike glycoproteins E2 and E1 (By similarity). Spike at virion surface are constituted of a trimer of E2-E1 heterodimers (PubMed:16407067). E2-E1 heterodimers interact with host VLDLR or LRP8/APOER2 to mediate viral entry (PubMed:34929721). Interacts with 6K protein (By similarity).</text>
</comment>
<comment type="subunit">
    <molecule>6K protein</molecule>
    <text evidence="1 6">Oligomer (By similarity). Interacts with spike glycoprotein E1. Interacts with spike glycoprotein E2 (By similarity).</text>
</comment>
<comment type="subcellular location">
    <molecule>Capsid protein</molecule>
    <subcellularLocation>
        <location evidence="1">Virion</location>
    </subcellularLocation>
    <subcellularLocation>
        <location evidence="9">Host cytoplasm</location>
    </subcellularLocation>
    <subcellularLocation>
        <location evidence="1">Host cell membrane</location>
    </subcellularLocation>
    <subcellularLocation>
        <location evidence="9">Host nucleus</location>
    </subcellularLocation>
    <text evidence="9">Shuttles between the cytoplasm and the nucleus.</text>
</comment>
<comment type="subcellular location">
    <molecule>Spike glycoprotein E2</molecule>
    <subcellularLocation>
        <location evidence="9">Virion membrane</location>
        <topology evidence="10">Single-pass type I membrane protein</topology>
    </subcellularLocation>
    <subcellularLocation>
        <location evidence="1">Host cell membrane</location>
        <topology evidence="9">Single-pass type I membrane protein</topology>
    </subcellularLocation>
</comment>
<comment type="subcellular location">
    <molecule>6K protein</molecule>
    <subcellularLocation>
        <location evidence="1">Host cell membrane</location>
        <topology evidence="10">Multi-pass membrane protein</topology>
    </subcellularLocation>
    <subcellularLocation>
        <location evidence="1">Virion membrane</location>
        <topology evidence="10">Multi-pass membrane protein</topology>
    </subcellularLocation>
    <subcellularLocation>
        <location evidence="1">Host Golgi apparatus</location>
    </subcellularLocation>
    <subcellularLocation>
        <location>Host Golgi apparatus</location>
        <location>Host trans-Golgi network</location>
    </subcellularLocation>
    <subcellularLocation>
        <location evidence="1">Host endoplasmic reticulum</location>
    </subcellularLocation>
</comment>
<comment type="subcellular location">
    <molecule>Spike glycoprotein E1</molecule>
    <subcellularLocation>
        <location evidence="9">Virion membrane</location>
        <topology evidence="10">Single-pass type I membrane protein</topology>
    </subcellularLocation>
    <subcellularLocation>
        <location evidence="1 9">Host cell membrane</location>
        <topology evidence="10">Single-pass type I membrane protein</topology>
    </subcellularLocation>
</comment>
<comment type="alternative products">
    <event type="ribosomal frameshifting"/>
    <isoform>
        <id>P03315-1</id>
        <name>Structural polyprotein</name>
        <sequence type="displayed"/>
    </isoform>
    <isoform>
        <id>P0DJZ6-1</id>
        <name>Frameshifted structural polyprotein</name>
        <sequence type="external"/>
    </isoform>
</comment>
<comment type="domain">
    <molecule>Capsid protein</molecule>
    <text evidence="1 9">The N-terminus contains a nuclear localization signal and a CRM1-mediated nuclear export signal (By similarity). The C-terminus functions as a protease during translation to cleave itself from the translating structural polyprotein (By similarity).</text>
</comment>
<comment type="domain">
    <molecule>Spike glycoprotein E1</molecule>
    <text evidence="31 32">The E1-DIII domain binds the host receptor VLDLR.</text>
</comment>
<comment type="PTM">
    <molecule>Isoform Structural polyprotein</molecule>
    <text evidence="14 22 23 29 37">Specific enzymatic cleavages in vivo yield mature proteins. Capsid protein is auto-cleaved during polyprotein translation, unmasking a signal peptide at the N-terminus of the precursor of E3/E2 (PubMed:3553612). The remaining polyprotein is then targeted to the host endoplasmic reticulum, where host signal peptidase cleaves it into pE2, 6K and E1 proteins. pE2 is further processed to mature E3 and E2 by host furin in trans-Golgi vesicle (PubMed:12584323). Protein processing process takes about 30 minutes at physiologic temperatures. The folding of the p62/6K/E1 precursor requires the formation of intrachain disulfide bonds and has been shown to involve a transient covalent interaction between the nascent and newly synthesized heterodimer and the host-cell chaperones, P4HB/PDI and PDIA3/ERp57. The folding pathway also includes non covalent interaction with human CANX/calnexin and CALR/calreticulin.</text>
</comment>
<comment type="PTM">
    <molecule>Spike glycoprotein E2</molecule>
    <text evidence="27">Palmitoylated via thioester bonds. These palmitoylations may induce disruption of the C-terminus transmembrane. This would result in the reorientation of E2 C-terminus from lumenal to cytoplasmic side.</text>
</comment>
<comment type="PTM">
    <text evidence="17">Envelope E1, E2 and E3 proteins are N-glycosylated.</text>
</comment>
<comment type="PTM">
    <molecule>Spike glycoprotein E1</molecule>
    <text evidence="27">Stearoylated.</text>
</comment>
<comment type="PTM">
    <molecule>6K protein</molecule>
    <text evidence="27">Palmitoylated via thioester bonds with about four covalently bound fatty acids per molecule.</text>
</comment>
<comment type="miscellaneous">
    <text evidence="38">Belongs to the Old World alphaviruses that usually cause fever, maculopapular rash, arthralgia and myalgia.</text>
</comment>
<comment type="miscellaneous">
    <text>The mature virion nucleocapsid consists of 240 copies of the capsid protein. 80 spike trimers of E1 and E2 are present at the surface of mature virion. They project about 100 Angstroms from the outer surface and are located at the local and strict three fold axis of the icosahedral lattice. The glycoproteins splay out to form a protein shell or skirt covering most of the outer surface of the membrane bilayer.</text>
</comment>
<comment type="miscellaneous">
    <molecule>Isoform Structural polyprotein</molecule>
    <text>Translated from a subgenomic RNA synthesized during togavirus replication.</text>
</comment>
<comment type="miscellaneous">
    <molecule>Isoform Structural polyprotein</molecule>
    <text>Produced by conventional translation.</text>
</comment>
<comment type="online information" name="Virus Particle ExploreR db">
    <link uri="https://viperdb.org/Info_Page.php?VDB=1dwn"/>
    <text>Icosahedral capsid structure</text>
</comment>
<organismHost>
    <name type="scientific">Aedes</name>
    <dbReference type="NCBI Taxonomy" id="7158"/>
</organismHost>
<organismHost>
    <name type="scientific">Atelerix albiventris</name>
    <name type="common">Middle-African hedgehog</name>
    <name type="synonym">Four-toed hedgehog</name>
    <dbReference type="NCBI Taxonomy" id="9368"/>
</organismHost>
<organismHost>
    <name type="scientific">Culex tritaeniorhynchus</name>
    <name type="common">Mosquito</name>
    <dbReference type="NCBI Taxonomy" id="7178"/>
</organismHost>
<organismHost>
    <name type="scientific">Halcyon</name>
    <dbReference type="NCBI Taxonomy" id="170865"/>
</organismHost>
<organismHost>
    <name type="scientific">Homo sapiens</name>
    <name type="common">Human</name>
    <dbReference type="NCBI Taxonomy" id="9606"/>
</organismHost>
<organismHost>
    <name type="scientific">Quelea</name>
    <dbReference type="NCBI Taxonomy" id="158617"/>
</organismHost>
<organismHost>
    <name type="scientific">Rhipicephalus</name>
    <dbReference type="NCBI Taxonomy" id="34630"/>
</organismHost>
<name>POLS_SFV</name>
<proteinExistence type="evidence at protein level"/>
<accession>P03315</accession>
<accession>B3TP01</accession>
<accession>Q809B6</accession>
<accession>Q8JMP5</accession>
<reference key="1">
    <citation type="journal article" date="1997" name="J. Gen. Virol.">
        <title>Sequence analysis of the avirulent, demyelinating A7 strain of Semliki Forest virus.</title>
        <authorList>
            <person name="Tarbatt C.J."/>
            <person name="Glasgow G.M."/>
            <person name="Mooney D.A."/>
            <person name="Sheahan B.J."/>
            <person name="Atkins G.J."/>
        </authorList>
    </citation>
    <scope>NUCLEOTIDE SEQUENCE [GENOMIC RNA]</scope>
    <source>
        <strain>A7</strain>
    </source>
</reference>
<reference key="2">
    <citation type="journal article" date="2008" name="J. Gen. Virol.">
        <title>Me Tri virus: a Semliki Forest virus strain from Vietnam?</title>
        <authorList>
            <person name="Tan le V."/>
            <person name="Ha do Q."/>
            <person name="Hien V.M."/>
            <person name="van der Hoek L."/>
            <person name="Farrar J."/>
            <person name="de Jong M.D."/>
        </authorList>
    </citation>
    <scope>NUCLEOTIDE SEQUENCE [GENOMIC RNA]</scope>
    <source>
        <strain>MTV</strain>
    </source>
</reference>
<reference key="3">
    <citation type="submission" date="2002-05" db="EMBL/GenBank/DDBJ databases">
        <title>Semliki Forest Virus - L10 Strain Complete Genome.</title>
        <authorList>
            <person name="Logue C."/>
            <person name="Mooney D."/>
            <person name="Shanley R."/>
            <person name="Atkins G.J."/>
        </authorList>
    </citation>
    <scope>NUCLEOTIDE SEQUENCE [GENOMIC RNA]</scope>
    <source>
        <strain>L10</strain>
    </source>
</reference>
<reference key="4">
    <citation type="journal article" date="1980" name="Proc. Natl. Acad. Sci. U.S.A.">
        <title>The capsid protein of Semliki Forest virus has clusters of basic amino acids and prolines in its amino-terminal region.</title>
        <authorList>
            <person name="Garoff H."/>
            <person name="Frischauf A.-M."/>
            <person name="Simons K."/>
            <person name="Lehrach H."/>
            <person name="Delius H."/>
        </authorList>
    </citation>
    <scope>NUCLEOTIDE SEQUENCE [GENOMIC RNA] OF 1-305</scope>
</reference>
<reference key="5">
    <citation type="journal article" date="1980" name="Nature">
        <title>Nucleotide sequence of cDNA coding for Semliki Forest virus membrane glycoproteins.</title>
        <authorList>
            <person name="Garoff H."/>
            <person name="Frischauf A.-M."/>
            <person name="Simons K."/>
            <person name="Lehrach H."/>
            <person name="Delius H."/>
        </authorList>
    </citation>
    <scope>NUCLEOTIDE SEQUENCE [GENOMIC RNA] OF 266-1253</scope>
</reference>
<reference key="6">
    <citation type="journal article" date="1984" name="Proc. Natl. Acad. Sci. U.S.A.">
        <title>An evolutionary tree relating eight alphaviruses, based on amino-terminal sequences of their glycoproteins.</title>
        <authorList>
            <person name="Bell J.R."/>
            <person name="Kinney R.M."/>
            <person name="Trent D.W."/>
            <person name="Strauss E.G."/>
            <person name="Strauss J.H."/>
        </authorList>
    </citation>
    <scope>PROTEIN SEQUENCE OF 334-402 AND 816-881</scope>
</reference>
<reference key="7">
    <citation type="journal article" date="1980" name="FEBS Lett.">
        <title>Carboxyl-terminal sequence analysis of the four structural proteins of Semliki Forest virus.</title>
        <authorList>
            <person name="Kalkkinen N."/>
        </authorList>
    </citation>
    <scope>PARTIAL PROTEIN SEQUENCE</scope>
</reference>
<reference key="8">
    <citation type="journal article" date="1979" name="Virology">
        <title>Role of protein synthesis in the assembly of Semliki forest virus nucleocapsid.</title>
        <authorList>
            <person name="Ulmanen I."/>
            <person name="Soederlund H."/>
            <person name="Kaeaeriaeinen L."/>
        </authorList>
    </citation>
    <scope>FUNCTION (CAPSID PROTEIN)</scope>
</reference>
<reference key="9">
    <citation type="journal article" date="1987" name="J. Virol.">
        <title>Processing of the Semliki Forest virus structural polyprotein: role of the capsid protease.</title>
        <authorList>
            <person name="Melancon P."/>
            <person name="Garoff H."/>
        </authorList>
    </citation>
    <scope>FUNCTION (CAPSID PROTEIN)</scope>
    <scope>AUTOCATALYTIC CLEAVAGE BY CAPSID PROTEIN</scope>
    <scope>MUTAGENESIS OF 219-SER-GLY-220</scope>
    <scope>CATALYTIC ACTIVITY (CAPSID PROTEIN)</scope>
    <scope>ACTIVE SITE (CAPSID PROTEIN)</scope>
    <scope>PROTEOLYTIC CLEAVAGE (STRUCTURAL POLYPROTEIN)</scope>
</reference>
<reference key="10">
    <citation type="journal article" date="1988" name="J. Biol. Chem.">
        <title>Chemical identification of cysteine as palmitoylation site in a transmembrane protein (Semliki Forest virus E1).</title>
        <authorList>
            <person name="Schmidt M."/>
            <person name="Schmidt M.F."/>
            <person name="Rott R."/>
        </authorList>
    </citation>
    <scope>STEAROYLATION AT CYS-1248</scope>
    <scope>PALMITOYLATION</scope>
</reference>
<reference key="11">
    <citation type="journal article" date="1991" name="EMBO J.">
        <title>The cytoplasmic domain of alphavirus E2 glycoprotein contains a short linear recognition signal required for viral budding.</title>
        <authorList>
            <person name="Kail M."/>
            <person name="Hollinshead M."/>
            <person name="Ansorge W."/>
            <person name="Pepperkok R."/>
            <person name="Frank R."/>
            <person name="Griffiths G."/>
            <person name="Vaux D."/>
        </authorList>
    </citation>
    <scope>FUNCTION (SPIKE GLYCOPROTEIN E2)</scope>
</reference>
<reference key="12">
    <citation type="journal article" date="1991" name="J. Biol. Chem.">
        <title>Processing of the p62 envelope precursor protein of Semliki Forest virus.</title>
        <authorList>
            <person name="Jain S.K."/>
            <person name="DeCandido S."/>
            <person name="Kielian M."/>
        </authorList>
    </citation>
    <scope>MUTAGENESIS OF ARG-330 AND ARG-333</scope>
    <scope>PROTEOLYTIC CLEAVAGE (PRECURSOR OF PROTEIN E3/E2)</scope>
</reference>
<reference key="13">
    <citation type="journal article" date="1991" name="J. Virol.">
        <title>Mutagenesis of the putative fusion domain of the Semliki Forest virus spike protein.</title>
        <authorList>
            <person name="Levy-Mintz P."/>
            <person name="Kielian M."/>
        </authorList>
    </citation>
    <scope>MUTAGENESIS OF ASP-890; LYS-894; GLY-898; PRO-901; MET-903 AND GLY-906</scope>
</reference>
<reference key="14">
    <citation type="journal article" date="1991" name="J. Virol.">
        <title>Internally located cleavable signal sequences direct the formation of Semliki Forest virus membrane proteins from a polyprotein precursor.</title>
        <authorList>
            <person name="Liljestrom P."/>
            <person name="Garoff H."/>
        </authorList>
    </citation>
    <scope>CLEAVAGE BY SIGNAL PEPTIDASE</scope>
    <scope>MUTAGENESIS OF ALA-755 AND ALA-815</scope>
</reference>
<reference key="15">
    <citation type="journal article" date="1991" name="Virology">
        <title>Fate of the 6K membrane protein of Semliki Forest virus during virus assembly.</title>
        <authorList>
            <person name="Lusa S."/>
            <person name="Garoff H."/>
            <person name="Liljestrom P."/>
        </authorList>
    </citation>
    <scope>FUNCTION (PROTEIN 6K)</scope>
</reference>
<reference key="16">
    <citation type="journal article" date="1992" name="J. Virol.">
        <title>Membrane fusion of Semliki Forest virus involves homotrimers of the fusion protein.</title>
        <authorList>
            <person name="Wahlberg J.M."/>
            <person name="Bron R."/>
            <person name="Wilschut J."/>
            <person name="Garoff H."/>
        </authorList>
    </citation>
    <scope>FUNCTION (SPIKE GLYCOPROTEIN E1)</scope>
    <scope>SUBUNIT (SPIKE GLYCOPROTEIN E1)</scope>
</reference>
<reference key="17">
    <citation type="journal article" date="1992" name="J. Virol.">
        <title>Role of ribosomes in Semliki Forest virus nucleocapsid uncoating.</title>
        <authorList>
            <person name="Singh I."/>
            <person name="Helenius A."/>
        </authorList>
    </citation>
    <scope>FUNCTION (CAPSID PROTEIN)</scope>
</reference>
<reference key="18">
    <citation type="journal article" date="1995" name="J. Virol.">
        <title>The 6-kilodalton membrane protein of Semliki Forest virus is involved in the budding process.</title>
        <authorList>
            <person name="Loewy A."/>
            <person name="Smyth J."/>
            <person name="von Bonsdorff C.H."/>
            <person name="Liljestrom P."/>
            <person name="Schlesinger M.J."/>
        </authorList>
    </citation>
    <scope>FUNCTION (6K PROTEIN)</scope>
</reference>
<reference key="19">
    <citation type="journal article" date="1998" name="J. Cell Biol.">
        <title>A single point mutation controls the cholesterol dependence of Semliki Forest virus entry and exit.</title>
        <authorList>
            <person name="Vashishtha M."/>
            <person name="Phalen T."/>
            <person name="Marquardt M.T."/>
            <person name="Ryu J.S."/>
            <person name="Ng A.C."/>
            <person name="Kielian M."/>
        </authorList>
    </citation>
    <scope>MUTAGENESIS OF GLY-898 AND GLY-906</scope>
</reference>
<reference key="20">
    <citation type="journal article" date="1998" name="J. Mol. Biol.">
        <title>Role of the C-terminal tryptophan residue for the structure-function of the alphavirus capsid protein.</title>
        <authorList>
            <person name="Skoging U."/>
            <person name="Liljestrom P."/>
        </authorList>
    </citation>
    <scope>FUNCTION (CAPSID PROTEIN)</scope>
    <scope>AUTOCATALYTIC CLEAVAGE (CAPSID PROTEIN)</scope>
</reference>
<reference key="21">
    <citation type="journal article" date="1999" name="Nature">
        <title>Glycoproteins form mixed disulphides with oxidoreductases during folding in living cells.</title>
        <authorList>
            <person name="Molinari M."/>
            <person name="Helenius A."/>
        </authorList>
    </citation>
    <scope>INTERACTION WITH HUMAN CHAPERONE P4HB/PDI</scope>
    <scope>INTERACTION WITH HUMAN CHAPERONE PDIA3/ERP57</scope>
</reference>
<reference key="22">
    <citation type="journal article" date="2002" name="J. Virol.">
        <title>Novel mutations that control the sphingolipid and cholesterol dependence of the Semliki Forest virus fusion protein.</title>
        <authorList>
            <person name="Chatterjee P.K."/>
            <person name="Eng C.H."/>
            <person name="Kielian M."/>
        </authorList>
    </citation>
    <scope>MUTAGENESIS OF LEU-859 AND VAL-993</scope>
    <scope>FUNCTION (SPIKE GLYCOPROTEIN E1)</scope>
</reference>
<reference key="23">
    <citation type="journal article" date="2003" name="J. Virol.">
        <title>Furin processing and proteolytic activation of Semliki Forest virus.</title>
        <authorList>
            <person name="Zhang X."/>
            <person name="Fugere M."/>
            <person name="Day R."/>
            <person name="Kielian M."/>
        </authorList>
    </citation>
    <scope>PROTEOLYTIC CLEAVAGE (STRUCTURAL POLYPROTEIN)</scope>
</reference>
<reference key="24">
    <citation type="journal article" date="2005" name="PLoS Biol.">
        <title>Rab7 associates with early endosomes to mediate sorting and transport of Semliki forest virus to late endosomes.</title>
        <authorList>
            <person name="Vonderheit A."/>
            <person name="Helenius A."/>
        </authorList>
    </citation>
    <scope>FUNCTION (CAPSID PROTEIN)</scope>
</reference>
<reference key="25">
    <citation type="journal article" date="2011" name="J. Virol.">
        <title>Activation of the alphavirus spike protein is suppressed by bound E3.</title>
        <authorList>
            <person name="Sjoeberg M."/>
            <person name="Lindqvist B."/>
            <person name="Garoff H."/>
        </authorList>
    </citation>
    <scope>FUNCTION (ASSEMBLY PROTEIN E3)</scope>
</reference>
<reference key="26">
    <citation type="journal article" date="2013" name="J. Virol.">
        <title>The role of E3 in pH protection during alphavirus assembly and exit.</title>
        <authorList>
            <person name="Uchime O."/>
            <person name="Fields W."/>
            <person name="Kielian M."/>
        </authorList>
    </citation>
    <scope>FUNCTION (ASSEMBLY PROTEIN E3)</scope>
</reference>
<reference key="27">
    <citation type="journal article" date="2024" name="Nat. Commun.">
        <title>LDLR is used as a cell entry receptor by multiple alphaviruses.</title>
        <authorList>
            <person name="Zhai X."/>
            <person name="Li X."/>
            <person name="Veit M."/>
            <person name="Wang N."/>
            <person name="Wang Y."/>
            <person name="Merits A."/>
            <person name="Jiang Z."/>
            <person name="Qin Y."/>
            <person name="Zhang X."/>
            <person name="Qi K."/>
            <person name="Jiao H."/>
            <person name="He W.T."/>
            <person name="Chen Y."/>
            <person name="Mao Y."/>
            <person name="Su S."/>
        </authorList>
    </citation>
    <scope>FUNCTION</scope>
    <scope>INTERACTION WITH HOST LDLR</scope>
</reference>
<reference key="28">
    <citation type="journal article" date="2022" name="Nature">
        <title>VLDLR and ApoER2 are receptors for multiple alphaviruses.</title>
        <authorList>
            <person name="Clark L.E."/>
            <person name="Clark S.A."/>
            <person name="Lin C."/>
            <person name="Liu J."/>
            <person name="Coscia A."/>
            <person name="Nabel K.G."/>
            <person name="Yang P."/>
            <person name="Neel D.V."/>
            <person name="Lee H."/>
            <person name="Brusic V."/>
            <person name="Stryapunina I."/>
            <person name="Plante K.S."/>
            <person name="Ahmed A.A."/>
            <person name="Catteruccia F."/>
            <person name="Young-Pearse T.L."/>
            <person name="Chiu I.M."/>
            <person name="Llopis P.M."/>
            <person name="Weaver S.C."/>
            <person name="Abraham J."/>
        </authorList>
    </citation>
    <scope>FUNCTION (SPIKE GLYCOPROTEIN E1)</scope>
    <scope>INTERACTION WITH HOST VLDLR AND LRP8/APOER2 (SPIKE GLYCOPROTEIN E1)</scope>
    <scope>FUNCTION (SPIKE GLYCOPROTEIN E2)</scope>
    <scope>INTERACTION WITH HOST VLDLR AND LRP8/APOER2 (SPIKE GLYCOPROTEIN E2)</scope>
</reference>
<reference key="29">
    <citation type="journal article" date="1997" name="Proteins">
        <title>Structure of Semliki Forest virus core protein.</title>
        <authorList>
            <person name="Choi H.-K."/>
            <person name="Lu G."/>
            <person name="Lee S."/>
            <person name="Wengler G."/>
            <person name="Rossmann M.G."/>
        </authorList>
    </citation>
    <scope>X-RAY CRYSTALLOGRAPHY (3.1 ANGSTROMS) OF 119-267</scope>
</reference>
<reference key="30">
    <citation type="journal article" date="2000" name="Mol. Cell">
        <title>Cryo-electron microscopy reveals the functional organization of an enveloped virus, Semliki Forest virus.</title>
        <authorList>
            <person name="Mancini E.J."/>
            <person name="Clarke M."/>
            <person name="Gowen B.E."/>
            <person name="Rutten T."/>
            <person name="Fuller S.D."/>
        </authorList>
    </citation>
    <scope>STRUCTURE BY ELECTRON MICROSCOPY (9.0 ANGSTROMS) OF 119-267</scope>
    <scope>DISULFIDE BONDS</scope>
</reference>
<reference key="31">
    <citation type="journal article" date="2001" name="Cell">
        <title>The Fusion glycoprotein shell of Semliki Forest virus: an icosahedral assembly primed for fusogenic activation at endosomal pH.</title>
        <authorList>
            <person name="Lescar J."/>
            <person name="Roussel A."/>
            <person name="Wien M.W."/>
            <person name="Navaza J."/>
            <person name="Fuller S.D."/>
            <person name="Wengler G."/>
            <person name="Wengler G."/>
            <person name="Rey F.A."/>
        </authorList>
    </citation>
    <scope>X-RAY CRYSTALLOGRAPHY (3.0 ANGSTROMS) OF 816-1205</scope>
</reference>
<reference key="32">
    <citation type="journal article" date="2004" name="Nature">
        <title>Conformational change and protein-protein interactions of the fusion protein of Semliki Forest virus.</title>
        <authorList>
            <person name="Gibbons D.L."/>
            <person name="Vaney M.C."/>
            <person name="Roussel A."/>
            <person name="Vigouroux A."/>
            <person name="Reilly B."/>
            <person name="Lepault J."/>
            <person name="Kielian M."/>
            <person name="Rey F.A."/>
        </authorList>
    </citation>
    <scope>X-RAY CRYSTALLOGRAPHY (3.2 ANGSTROMS) OF 816-1206</scope>
    <scope>GLYCOSYLATION AT ASN-956</scope>
    <scope>DISULFIDE BONDS</scope>
    <scope>SUBUNIT (SPIKE GLYCOPROTEIN E1)</scope>
</reference>
<reference evidence="39" key="33">
    <citation type="journal article" date="2006" name="Structure">
        <title>Structure and interactions at the viral surface of the envelope protein E1 of Semliki Forest virus.</title>
        <authorList>
            <person name="Roussel A."/>
            <person name="Lescar J."/>
            <person name="Vaney M.C."/>
            <person name="Wengler G."/>
            <person name="Wengler G."/>
            <person name="Rey F.A."/>
        </authorList>
    </citation>
    <scope>X-RAY CRYSTALLOGRAPHY (3.0 ANGSTROMS) OF 816-1206</scope>
    <scope>DISULFIDE BONDS</scope>
    <scope>DOMAIN (SPIKE GLYCOPROTEIN E1)</scope>
    <scope>SUBUNIT (SPIKE GLYCOPROTEIN E1)</scope>
    <scope>GLYCOSYLATION AT ASN-956</scope>
</reference>
<reference evidence="40" key="34">
    <citation type="journal article" date="2022" name="Nat. Commun.">
        <title>Visualization of conformational changes and membrane remodeling leading to genome delivery by viral class-II fusion machinery.</title>
        <authorList>
            <person name="Mangala Prasad V."/>
            <person name="Blijleven J.S."/>
            <person name="Smit J.M."/>
            <person name="Lee K.K."/>
        </authorList>
    </citation>
    <scope>STRUCTURE BY ELECTRON MICROSCOPY (27.2 ANGSTROMS) OF 816-1206</scope>
    <scope>FUNCTION (SPIKE GLYCOPROTEIN E1)</scope>
</reference>
<reference evidence="41" key="35">
    <citation type="journal article" date="2023" name="Cell">
        <title>Structure of Semliki Forest virus in complex with its receptor VLDLR.</title>
        <authorList>
            <person name="Cao D."/>
            <person name="Ma B."/>
            <person name="Cao Z."/>
            <person name="Zhang X."/>
            <person name="Xiang Y."/>
        </authorList>
    </citation>
    <scope>STRUCTURE BY ELECTRON MICROSCOPY (3.0 ANGSTROMS) OF THE VIRAL PARTICLE IN COMPLEX WITH HOST RECEPTOR VLDLR</scope>
    <scope>DOMAIN (SPIKE GLYCOPROTEIN E1)</scope>
    <scope>INTERACTION WITH HOST RECEPTOR VLDLR (SPKIE GLYCOPROTEIN E1)</scope>
</reference>
<reference evidence="42" key="36">
    <citation type="journal article" date="2024" name="Nat. Commun.">
        <title>Structural basis for VLDLR recognition by eastern equine encephalitis virus.</title>
        <authorList>
            <person name="Yang P."/>
            <person name="Li W."/>
            <person name="Fan X."/>
            <person name="Pan J."/>
            <person name="Mann C.J."/>
            <person name="Varnum H."/>
            <person name="Clark L.E."/>
            <person name="Clark S.A."/>
            <person name="Coscia A."/>
            <person name="Basu H."/>
            <person name="Smith K.N."/>
            <person name="Brusic V."/>
            <person name="Abraham J."/>
        </authorList>
    </citation>
    <scope>STRUCTURE BY ELECTRON MICROSCOPY (3.70 ANGSTROMS) OF 116-267; 273-325; 339-755 AND 816-1253 IN COMPLEX WITH HOST RECEPTOR VLDLR</scope>
    <scope>DISULFIDE BONDS</scope>
    <scope>INTERACTION WITH HOST RECEPTOR VLDLR (SPKIE GLYCOPROTEIN E1)</scope>
    <scope>DOMAIN (SPIKE GLYCOPROTEIN E1)</scope>
    <scope>MUTAGENESIS OF LYS-1160 AND LYS-1162</scope>
</reference>
<protein>
    <recommendedName>
        <fullName>Structural polyprotein</fullName>
    </recommendedName>
    <alternativeName>
        <fullName>p130</fullName>
    </alternativeName>
    <component>
        <recommendedName>
            <fullName>Capsid protein</fullName>
            <ecNumber evidence="29">3.4.21.90</ecNumber>
        </recommendedName>
        <alternativeName>
            <fullName>Coat protein</fullName>
            <shortName>C</shortName>
        </alternativeName>
    </component>
    <component>
        <recommendedName>
            <fullName>Precursor of protein E3/E2</fullName>
        </recommendedName>
        <alternativeName>
            <fullName>p62</fullName>
        </alternativeName>
        <alternativeName>
            <fullName>pE2</fullName>
        </alternativeName>
    </component>
    <component>
        <recommendedName>
            <fullName>Assembly protein E3</fullName>
        </recommendedName>
    </component>
    <component>
        <recommendedName>
            <fullName>Spike glycoprotein E2</fullName>
        </recommendedName>
        <alternativeName>
            <fullName>E2 envelope glycoprotein</fullName>
        </alternativeName>
    </component>
    <component>
        <recommendedName>
            <fullName>6K protein</fullName>
        </recommendedName>
    </component>
    <component>
        <recommendedName>
            <fullName>Spike glycoprotein E1</fullName>
        </recommendedName>
        <alternativeName>
            <fullName>E1 envelope glycoprotein</fullName>
        </alternativeName>
    </component>
</protein>
<feature type="chain" id="PRO_0000041311" description="Capsid protein">
    <location>
        <begin position="1"/>
        <end position="267"/>
    </location>
</feature>
<feature type="chain" id="PRO_0000226237" description="Precursor of protein E3/E2">
    <location>
        <begin position="268"/>
        <end position="755"/>
    </location>
</feature>
<feature type="chain" id="PRO_0000041312" description="Assembly protein E3">
    <location>
        <begin position="268"/>
        <end position="333"/>
    </location>
</feature>
<feature type="chain" id="PRO_0000041313" description="Spike glycoprotein E2">
    <location>
        <begin position="334"/>
        <end position="755"/>
    </location>
</feature>
<feature type="chain" id="PRO_0000041314" description="6K protein">
    <location>
        <begin position="756"/>
        <end position="815"/>
    </location>
</feature>
<feature type="chain" id="PRO_0000041315" description="Spike glycoprotein E1">
    <location>
        <begin position="816"/>
        <end position="1253"/>
    </location>
</feature>
<feature type="topological domain" description="Extracellular" evidence="10">
    <location>
        <begin position="268"/>
        <end position="701"/>
    </location>
</feature>
<feature type="transmembrane region" description="Helical" evidence="10">
    <location>
        <begin position="702"/>
        <end position="722"/>
    </location>
</feature>
<feature type="topological domain" description="Cytoplasmic" evidence="10">
    <location>
        <begin position="723"/>
        <end position="755"/>
    </location>
</feature>
<feature type="topological domain" description="Extracellular" evidence="10">
    <location>
        <begin position="756"/>
        <end position="770"/>
    </location>
</feature>
<feature type="transmembrane region" description="Helical" evidence="10">
    <location>
        <begin position="771"/>
        <end position="791"/>
    </location>
</feature>
<feature type="topological domain" description="Cytoplasmic" evidence="10">
    <location>
        <position position="792"/>
    </location>
</feature>
<feature type="transmembrane region" description="Helical" evidence="10">
    <location>
        <begin position="793"/>
        <end position="813"/>
    </location>
</feature>
<feature type="topological domain" description="Extracellular" evidence="10">
    <location>
        <begin position="814"/>
        <end position="1230"/>
    </location>
</feature>
<feature type="transmembrane region" description="Helical" evidence="10">
    <location>
        <begin position="1231"/>
        <end position="1251"/>
    </location>
</feature>
<feature type="topological domain" description="Cytoplasmic" evidence="10">
    <location>
        <begin position="1252"/>
        <end position="1253"/>
    </location>
</feature>
<feature type="domain" description="Peptidase S3" evidence="11">
    <location>
        <begin position="119"/>
        <end position="267"/>
    </location>
</feature>
<feature type="region of interest" description="Host transcription inhibition" evidence="2">
    <location>
        <begin position="37"/>
        <end position="71"/>
    </location>
</feature>
<feature type="region of interest" description="Disordered" evidence="12">
    <location>
        <begin position="58"/>
        <end position="109"/>
    </location>
</feature>
<feature type="region of interest" description="Binding to the viral RNA" evidence="4">
    <location>
        <begin position="87"/>
        <end position="120"/>
    </location>
</feature>
<feature type="region of interest" description="Ribosome-binding" evidence="4">
    <location>
        <begin position="105"/>
        <end position="119"/>
    </location>
</feature>
<feature type="region of interest" description="Interaction with spike glycoprotein E2" evidence="1">
    <location>
        <begin position="161"/>
        <end position="166"/>
    </location>
</feature>
<feature type="region of interest" description="Dimerization of the capsid protein" evidence="3">
    <location>
        <begin position="189"/>
        <end position="199"/>
    </location>
</feature>
<feature type="region of interest" description="Dimerization of the capsid protein" evidence="3">
    <location>
        <begin position="225"/>
        <end position="229"/>
    </location>
</feature>
<feature type="region of interest" description="Interaction with the capsid protein" evidence="1">
    <location>
        <begin position="723"/>
        <end position="727"/>
    </location>
</feature>
<feature type="region of interest" description="Transient transmembrane before p62-6K protein processing" evidence="10">
    <location>
        <begin position="728"/>
        <end position="748"/>
    </location>
</feature>
<feature type="region of interest" description="E1 fusion peptide loop" evidence="9">
    <location>
        <begin position="899"/>
        <end position="916"/>
    </location>
</feature>
<feature type="region of interest" description="E1-DIII; interaction with host receptor VLDLR" evidence="19 31">
    <location>
        <begin position="1112"/>
        <end position="1192"/>
    </location>
</feature>
<feature type="short sequence motif" description="Nuclear localization signal" evidence="2">
    <location>
        <begin position="64"/>
        <end position="105"/>
    </location>
</feature>
<feature type="short sequence motif" description="Nuclear export signal" evidence="2">
    <location>
        <begin position="150"/>
        <end position="160"/>
    </location>
</feature>
<feature type="compositionally biased region" description="Basic residues" evidence="12">
    <location>
        <begin position="65"/>
        <end position="107"/>
    </location>
</feature>
<feature type="active site" description="Charge relay system" evidence="11">
    <location>
        <position position="145"/>
    </location>
</feature>
<feature type="active site" description="Charge relay system" evidence="11">
    <location>
        <position position="167"/>
    </location>
</feature>
<feature type="active site" description="Charge relay system" evidence="11 29">
    <location>
        <position position="219"/>
    </location>
</feature>
<feature type="site" description="Involved in dimerization of the capsid protein" evidence="8">
    <location>
        <position position="193"/>
    </location>
</feature>
<feature type="site" description="Involved in dimerization of the capsid protein" evidence="8">
    <location>
        <position position="226"/>
    </location>
</feature>
<feature type="site" description="Cleavage; by autolysis" evidence="29">
    <location>
        <begin position="267"/>
        <end position="268"/>
    </location>
</feature>
<feature type="site" description="Cleavage; by host furin" evidence="14">
    <location>
        <begin position="333"/>
        <end position="334"/>
    </location>
</feature>
<feature type="site" description="Cleavage; by host signal peptidase" evidence="22">
    <location>
        <begin position="755"/>
        <end position="756"/>
    </location>
</feature>
<feature type="site" description="Cleavage; by host signal peptidase" evidence="22">
    <location>
        <begin position="815"/>
        <end position="816"/>
    </location>
</feature>
<feature type="site" description="Interaction with host receptor VLDLR" evidence="31 32">
    <location>
        <position position="1140"/>
    </location>
</feature>
<feature type="site" description="Interaction with host receptor VLDLR" evidence="31">
    <location>
        <position position="1142"/>
    </location>
</feature>
<feature type="site" description="Interaction with host receptor VLDLR" evidence="31">
    <location>
        <position position="1150"/>
    </location>
</feature>
<feature type="site" description="Interaction with host receptor VLDLR" evidence="31">
    <location>
        <position position="1152"/>
    </location>
</feature>
<feature type="site" description="Interaction with host receptor VLDLR" evidence="31">
    <location>
        <position position="1153"/>
    </location>
</feature>
<feature type="site" description="Interaction with host receptor VLDLR" evidence="32">
    <location>
        <position position="1160"/>
    </location>
</feature>
<feature type="site" description="Interaction with host receptor VLDLR" evidence="32">
    <location>
        <position position="1162"/>
    </location>
</feature>
<feature type="lipid moiety-binding region" description="S-stearoyl cysteine; by host" evidence="7">
    <location>
        <position position="718"/>
    </location>
</feature>
<feature type="lipid moiety-binding region" description="S-stearoyl cysteine; by host" evidence="7">
    <location>
        <position position="728"/>
    </location>
</feature>
<feature type="lipid moiety-binding region" description="S-palmitoyl cysteine; by host" evidence="7">
    <location>
        <position position="748"/>
    </location>
</feature>
<feature type="lipid moiety-binding region" description="S-palmitoyl cysteine; by host" evidence="7">
    <location>
        <position position="749"/>
    </location>
</feature>
<feature type="lipid moiety-binding region" description="S-stearoyl cysteine; by host" evidence="27">
    <location>
        <position position="1248"/>
    </location>
</feature>
<feature type="glycosylation site" description="N-linked (GlcNAc...) asparagine; by host" evidence="10">
    <location>
        <position position="280"/>
    </location>
</feature>
<feature type="glycosylation site" description="N-linked (GlcNAc...) asparagine; by host" evidence="10">
    <location>
        <position position="327"/>
    </location>
</feature>
<feature type="glycosylation site" description="N-linked (GlcNAc...) asparagine; by host" evidence="7">
    <location>
        <position position="533"/>
    </location>
</feature>
<feature type="glycosylation site" description="N-linked (GlcNAc...) asparagine; by host" evidence="7">
    <location>
        <position position="595"/>
    </location>
</feature>
<feature type="glycosylation site" description="N-linked (GlcNAc...) asparagine; by host" evidence="17 34">
    <location>
        <position position="956"/>
    </location>
</feature>
<feature type="glycosylation site" description="N-linked (GlcNAc...) asparagine; by host" evidence="7">
    <location>
        <position position="1085"/>
    </location>
</feature>
<feature type="disulfide bond" evidence="19">
    <location>
        <begin position="119"/>
        <end position="134"/>
    </location>
</feature>
<feature type="disulfide bond" evidence="6">
    <location>
        <begin position="276"/>
        <end position="285"/>
    </location>
</feature>
<feature type="disulfide bond" evidence="6">
    <location>
        <begin position="290"/>
        <end position="294"/>
    </location>
</feature>
<feature type="disulfide bond" evidence="6">
    <location>
        <begin position="293"/>
        <end position="325"/>
    </location>
</feature>
<feature type="disulfide bond" evidence="5">
    <location>
        <begin position="352"/>
        <end position="458"/>
    </location>
</feature>
<feature type="disulfide bond" evidence="5">
    <location>
        <begin position="355"/>
        <end position="361"/>
    </location>
</feature>
<feature type="disulfide bond" evidence="5">
    <location>
        <begin position="424"/>
        <end position="438"/>
    </location>
</feature>
<feature type="disulfide bond" evidence="6">
    <location>
        <begin position="486"/>
        <end position="598"/>
    </location>
</feature>
<feature type="disulfide bond" evidence="6">
    <location>
        <begin position="534"/>
        <end position="558"/>
    </location>
</feature>
<feature type="disulfide bond" evidence="6">
    <location>
        <begin position="536"/>
        <end position="553"/>
    </location>
</feature>
<feature type="disulfide bond" evidence="6">
    <location>
        <begin position="728"/>
        <end position="749"/>
    </location>
</feature>
<feature type="disulfide bond" evidence="19">
    <location>
        <begin position="864"/>
        <end position="929"/>
    </location>
</feature>
<feature type="disulfide bond" evidence="19">
    <location>
        <begin position="877"/>
        <end position="909"/>
    </location>
</feature>
<feature type="disulfide bond" evidence="19">
    <location>
        <begin position="878"/>
        <end position="911"/>
    </location>
</feature>
<feature type="disulfide bond" evidence="19">
    <location>
        <begin position="883"/>
        <end position="893"/>
    </location>
</feature>
<feature type="disulfide bond" evidence="19">
    <location>
        <begin position="1074"/>
        <end position="1086"/>
    </location>
</feature>
<feature type="disulfide bond" evidence="19">
    <location>
        <begin position="1116"/>
        <end position="1191"/>
    </location>
</feature>
<feature type="disulfide bond" evidence="19">
    <location>
        <begin position="1121"/>
        <end position="1195"/>
    </location>
</feature>
<feature type="disulfide bond" evidence="19">
    <location>
        <begin position="1143"/>
        <end position="1185"/>
    </location>
</feature>
<feature type="sequence variant" description="In strain: A7.">
    <original>A</original>
    <variation>T</variation>
    <location>
        <position position="62"/>
    </location>
</feature>
<feature type="sequence variant" description="In strain: L10.">
    <original>R</original>
    <variation>G</variation>
    <location>
        <position position="63"/>
    </location>
</feature>
<feature type="sequence variant" description="In strain: A7, L10 and MTV.">
    <original>N</original>
    <variation>K</variation>
    <location>
        <position position="85"/>
    </location>
</feature>
<feature type="sequence variant" description="In strain: A7.">
    <original>A</original>
    <variation>T</variation>
    <location>
        <position position="279"/>
    </location>
</feature>
<feature type="sequence variant" description="In strain: A7.">
    <original>V</original>
    <variation>A</variation>
    <location>
        <position position="291"/>
    </location>
</feature>
<feature type="sequence variant" description="In strain: A7, L10 and MTV.">
    <original>V</original>
    <variation>I</variation>
    <location>
        <position position="370"/>
    </location>
</feature>
<feature type="sequence variant" description="In strain: A7, L10 and MTV.">
    <original>K</original>
    <variation>T</variation>
    <location>
        <position position="437"/>
    </location>
</feature>
<feature type="sequence variant" description="In strain: A7.">
    <original>N</original>
    <variation>S</variation>
    <location>
        <position position="545"/>
    </location>
</feature>
<feature type="sequence variant" description="In strain: A7 and MTV.">
    <original>M</original>
    <variation>K</variation>
    <location>
        <position position="548"/>
    </location>
</feature>
<feature type="sequence variant" description="In strain: MTV.">
    <original>E</original>
    <variation>K</variation>
    <location>
        <position position="614"/>
    </location>
</feature>
<feature type="sequence variant" description="In strain: A7.">
    <original>V</original>
    <variation>A</variation>
    <location>
        <position position="700"/>
    </location>
</feature>
<feature type="sequence variant" description="In strain: A7.">
    <original>V</original>
    <variation>A</variation>
    <location>
        <position position="704"/>
    </location>
</feature>
<feature type="sequence variant" description="In strain: A7 and MTV.">
    <original>V</original>
    <variation>A</variation>
    <location>
        <position position="722"/>
    </location>
</feature>
<feature type="sequence variant" description="In strain: A7.">
    <original>A</original>
    <variation>S</variation>
    <location>
        <position position="880"/>
    </location>
</feature>
<feature type="sequence variant" description="In strain: A7.">
    <original>R</original>
    <variation>K</variation>
    <location>
        <position position="930"/>
    </location>
</feature>
<feature type="sequence variant" description="In strain: A7 and MTV.">
    <original>M</original>
    <variation>T</variation>
    <location>
        <position position="1043"/>
    </location>
</feature>
<feature type="sequence variant" description="In strain: A7 and MTV.">
    <original>I</original>
    <variation>T</variation>
    <location>
        <position position="1112"/>
    </location>
</feature>
<feature type="sequence variant" description="In strain: A7.">
    <original>T</original>
    <variation>K</variation>
    <location>
        <position position="1134"/>
    </location>
</feature>
<feature type="sequence variant" description="In strain: A7, L10 and MTV.">
    <original>N</original>
    <variation>D</variation>
    <location>
        <position position="1138"/>
    </location>
</feature>
<feature type="sequence variant" description="In strain: MTV.">
    <original>G</original>
    <variation>R</variation>
    <location>
        <position position="1165"/>
    </location>
</feature>
<feature type="sequence variant" description="In strain: A7 and MTV.">
    <original>R</original>
    <variation>K</variation>
    <location>
        <position position="1188"/>
    </location>
</feature>
<feature type="mutagenesis site" description="Loss of autocatalytic cleavage by capsid protein." evidence="29">
    <original>SG</original>
    <variation>RST</variation>
    <location>
        <begin position="219"/>
        <end position="220"/>
    </location>
</feature>
<feature type="mutagenesis site" description="Complete loss of cleavage by capsid protease.">
    <original>W</original>
    <variation>A</variation>
    <variation>R</variation>
    <location>
        <position position="267"/>
    </location>
</feature>
<feature type="mutagenesis site" description="Complete loss of p62 precursor processing." evidence="23">
    <original>R</original>
    <variation>S</variation>
    <location>
        <position position="330"/>
    </location>
</feature>
<feature type="mutagenesis site" description="Complete loss of p62 precursor processing." evidence="23">
    <original>R</original>
    <variation>F</variation>
    <location>
        <position position="333"/>
    </location>
</feature>
<feature type="mutagenesis site" description="Complete loss of p62 precursor-6K cleavage." evidence="22">
    <original>A</original>
    <variation>F</variation>
    <location>
        <position position="755"/>
    </location>
</feature>
<feature type="mutagenesis site" description="Complete loss of 6K protein-E1 envelope glycoprotein cleavage." evidence="22">
    <original>A</original>
    <variation>F</variation>
    <location>
        <position position="815"/>
    </location>
</feature>
<feature type="mutagenesis site" description="E1 fusion is less cholesterol and sphingolipid dependent." evidence="13">
    <original>L</original>
    <variation>F</variation>
    <location>
        <position position="859"/>
    </location>
</feature>
<feature type="mutagenesis site" description="Shifts the pH threshold for fusion to a more acidic range." evidence="24">
    <original>D</original>
    <variation>A</variation>
    <location>
        <position position="890"/>
    </location>
</feature>
<feature type="mutagenesis site" description="No effect on E1 fusion activity." evidence="24">
    <original>K</original>
    <variation>Q</variation>
    <location>
        <position position="894"/>
    </location>
</feature>
<feature type="mutagenesis site" description="Shifts the pH threshold for fusion to a more acidic range." evidence="24 36">
    <original>G</original>
    <variation>A</variation>
    <location>
        <position position="898"/>
    </location>
</feature>
<feature type="mutagenesis site" description="No effect on E1 fusion activity." evidence="24 36">
    <original>G</original>
    <variation>D</variation>
    <location>
        <position position="898"/>
    </location>
</feature>
<feature type="mutagenesis site" description="Retention of E1 protein in endoplasmic reticulum." evidence="24">
    <original>P</original>
    <variation>D</variation>
    <location>
        <position position="901"/>
    </location>
</feature>
<feature type="mutagenesis site" description="No effect on E1 fusion activity." evidence="24">
    <original>M</original>
    <variation>L</variation>
    <location>
        <position position="903"/>
    </location>
</feature>
<feature type="mutagenesis site" description="Shifts the pH threshold for fusion to a more acidic range." evidence="24 36">
    <original>G</original>
    <variation>A</variation>
    <location>
        <position position="906"/>
    </location>
</feature>
<feature type="mutagenesis site" description="Complete loss of E1 fusion activity." evidence="24 36">
    <original>G</original>
    <variation>D</variation>
    <location>
        <position position="906"/>
    </location>
</feature>
<feature type="mutagenesis site" description="Retention of E1 protein in endoplasmic reticulum." evidence="24 36">
    <original>G</original>
    <variation>P</variation>
    <location>
        <position position="906"/>
    </location>
</feature>
<feature type="mutagenesis site" description="E1 fusion is less cholesterol and sphingolipid dependent." evidence="13">
    <original>V</original>
    <variation>A</variation>
    <location>
        <position position="993"/>
    </location>
</feature>
<feature type="mutagenesis site" description="Complete loss of interaction with host receptor VLDLR." evidence="32">
    <original>K</original>
    <variation>A</variation>
    <location>
        <position position="1160"/>
    </location>
</feature>
<feature type="mutagenesis site" description="Complete loss of interaction with host receptor VLDLR." evidence="32">
    <original>K</original>
    <variation>A</variation>
    <location>
        <position position="1162"/>
    </location>
</feature>
<feature type="helix" evidence="47">
    <location>
        <begin position="107"/>
        <end position="119"/>
    </location>
</feature>
<feature type="strand" evidence="44">
    <location>
        <begin position="120"/>
        <end position="125"/>
    </location>
</feature>
<feature type="strand" evidence="44">
    <location>
        <begin position="128"/>
        <end position="134"/>
    </location>
</feature>
<feature type="strand" evidence="44">
    <location>
        <begin position="139"/>
        <end position="141"/>
    </location>
</feature>
<feature type="strand" evidence="48">
    <location>
        <begin position="144"/>
        <end position="146"/>
    </location>
</feature>
<feature type="strand" evidence="44">
    <location>
        <begin position="148"/>
        <end position="152"/>
    </location>
</feature>
<feature type="helix" evidence="44">
    <location>
        <begin position="153"/>
        <end position="156"/>
    </location>
</feature>
<feature type="strand" evidence="44">
    <location>
        <begin position="161"/>
        <end position="163"/>
    </location>
</feature>
<feature type="turn" evidence="44">
    <location>
        <begin position="164"/>
        <end position="167"/>
    </location>
</feature>
<feature type="strand" evidence="44">
    <location>
        <begin position="168"/>
        <end position="172"/>
    </location>
</feature>
<feature type="helix" evidence="44">
    <location>
        <begin position="175"/>
        <end position="180"/>
    </location>
</feature>
<feature type="strand" evidence="44">
    <location>
        <begin position="190"/>
        <end position="195"/>
    </location>
</feature>
<feature type="strand" evidence="44">
    <location>
        <begin position="198"/>
        <end position="203"/>
    </location>
</feature>
<feature type="strand" evidence="44">
    <location>
        <begin position="206"/>
        <end position="210"/>
    </location>
</feature>
<feature type="strand" evidence="44">
    <location>
        <begin position="222"/>
        <end position="224"/>
    </location>
</feature>
<feature type="strand" evidence="44">
    <location>
        <begin position="230"/>
        <end position="239"/>
    </location>
</feature>
<feature type="strand" evidence="44">
    <location>
        <begin position="241"/>
        <end position="251"/>
    </location>
</feature>
<feature type="strand" evidence="44">
    <location>
        <begin position="253"/>
        <end position="259"/>
    </location>
</feature>
<feature type="helix" evidence="47">
    <location>
        <begin position="337"/>
        <end position="339"/>
    </location>
</feature>
<feature type="helix" evidence="47">
    <location>
        <begin position="341"/>
        <end position="344"/>
    </location>
</feature>
<feature type="strand" evidence="47">
    <location>
        <begin position="350"/>
        <end position="354"/>
    </location>
</feature>
<feature type="strand" evidence="47">
    <location>
        <begin position="356"/>
        <end position="358"/>
    </location>
</feature>
<feature type="strand" evidence="47">
    <location>
        <begin position="361"/>
        <end position="365"/>
    </location>
</feature>
<feature type="strand" evidence="47">
    <location>
        <begin position="367"/>
        <end position="371"/>
    </location>
</feature>
<feature type="strand" evidence="47">
    <location>
        <begin position="379"/>
        <end position="389"/>
    </location>
</feature>
<feature type="strand" evidence="47">
    <location>
        <begin position="395"/>
        <end position="404"/>
    </location>
</feature>
<feature type="strand" evidence="47">
    <location>
        <begin position="407"/>
        <end position="412"/>
    </location>
</feature>
<feature type="helix" evidence="47">
    <location>
        <begin position="413"/>
        <end position="415"/>
    </location>
</feature>
<feature type="strand" evidence="47">
    <location>
        <begin position="417"/>
        <end position="422"/>
    </location>
</feature>
<feature type="strand" evidence="47">
    <location>
        <begin position="425"/>
        <end position="437"/>
    </location>
</feature>
<feature type="strand" evidence="47">
    <location>
        <begin position="440"/>
        <end position="449"/>
    </location>
</feature>
<feature type="strand" evidence="47">
    <location>
        <begin position="455"/>
        <end position="464"/>
    </location>
</feature>
<feature type="strand" evidence="47">
    <location>
        <begin position="469"/>
        <end position="472"/>
    </location>
</feature>
<feature type="strand" evidence="47">
    <location>
        <begin position="479"/>
        <end position="489"/>
    </location>
</feature>
<feature type="strand" evidence="47">
    <location>
        <begin position="499"/>
        <end position="503"/>
    </location>
</feature>
<feature type="strand" evidence="47">
    <location>
        <begin position="508"/>
        <end position="513"/>
    </location>
</feature>
<feature type="strand" evidence="47">
    <location>
        <begin position="515"/>
        <end position="517"/>
    </location>
</feature>
<feature type="strand" evidence="47">
    <location>
        <begin position="520"/>
        <end position="523"/>
    </location>
</feature>
<feature type="strand" evidence="47">
    <location>
        <begin position="530"/>
        <end position="534"/>
    </location>
</feature>
<feature type="strand" evidence="47">
    <location>
        <begin position="536"/>
        <end position="539"/>
    </location>
</feature>
<feature type="strand" evidence="47">
    <location>
        <begin position="542"/>
        <end position="546"/>
    </location>
</feature>
<feature type="strand" evidence="47">
    <location>
        <begin position="548"/>
        <end position="552"/>
    </location>
</feature>
<feature type="helix" evidence="47">
    <location>
        <begin position="555"/>
        <end position="557"/>
    </location>
</feature>
<feature type="strand" evidence="47">
    <location>
        <begin position="558"/>
        <end position="562"/>
    </location>
</feature>
<feature type="strand" evidence="47">
    <location>
        <begin position="567"/>
        <end position="570"/>
    </location>
</feature>
<feature type="strand" evidence="47">
    <location>
        <begin position="585"/>
        <end position="588"/>
    </location>
</feature>
<feature type="strand" evidence="47">
    <location>
        <begin position="593"/>
        <end position="601"/>
    </location>
</feature>
<feature type="strand" evidence="47">
    <location>
        <begin position="607"/>
        <end position="609"/>
    </location>
</feature>
<feature type="strand" evidence="47">
    <location>
        <begin position="612"/>
        <end position="619"/>
    </location>
</feature>
<feature type="strand" evidence="47">
    <location>
        <begin position="625"/>
        <end position="631"/>
    </location>
</feature>
<feature type="strand" evidence="47">
    <location>
        <begin position="633"/>
        <end position="635"/>
    </location>
</feature>
<feature type="strand" evidence="47">
    <location>
        <begin position="639"/>
        <end position="643"/>
    </location>
</feature>
<feature type="strand" evidence="47">
    <location>
        <begin position="647"/>
        <end position="652"/>
    </location>
</feature>
<feature type="strand" evidence="47">
    <location>
        <begin position="658"/>
        <end position="662"/>
    </location>
</feature>
<feature type="strand" evidence="47">
    <location>
        <begin position="668"/>
        <end position="672"/>
    </location>
</feature>
<feature type="helix" evidence="47">
    <location>
        <begin position="684"/>
        <end position="694"/>
    </location>
</feature>
<feature type="helix" evidence="47">
    <location>
        <begin position="696"/>
        <end position="729"/>
    </location>
</feature>
<feature type="strand" evidence="47">
    <location>
        <begin position="733"/>
        <end position="737"/>
    </location>
</feature>
<feature type="helix" evidence="47">
    <location>
        <begin position="742"/>
        <end position="747"/>
    </location>
</feature>
<feature type="strand" evidence="45">
    <location>
        <begin position="821"/>
        <end position="823"/>
    </location>
</feature>
<feature type="strand" evidence="45">
    <location>
        <begin position="830"/>
        <end position="832"/>
    </location>
</feature>
<feature type="strand" evidence="45">
    <location>
        <begin position="837"/>
        <end position="839"/>
    </location>
</feature>
<feature type="strand" evidence="45">
    <location>
        <begin position="844"/>
        <end position="863"/>
    </location>
</feature>
<feature type="strand" evidence="45">
    <location>
        <begin position="866"/>
        <end position="869"/>
    </location>
</feature>
<feature type="strand" evidence="45">
    <location>
        <begin position="874"/>
        <end position="876"/>
    </location>
</feature>
<feature type="strand" evidence="45">
    <location>
        <begin position="892"/>
        <end position="898"/>
    </location>
</feature>
<feature type="helix" evidence="45">
    <location>
        <begin position="903"/>
        <end position="907"/>
    </location>
</feature>
<feature type="strand" evidence="45">
    <location>
        <begin position="910"/>
        <end position="913"/>
    </location>
</feature>
<feature type="strand" evidence="45">
    <location>
        <begin position="916"/>
        <end position="925"/>
    </location>
</feature>
<feature type="turn" evidence="45">
    <location>
        <begin position="927"/>
        <end position="931"/>
    </location>
</feature>
<feature type="strand" evidence="45">
    <location>
        <begin position="934"/>
        <end position="954"/>
    </location>
</feature>
<feature type="strand" evidence="45">
    <location>
        <begin position="958"/>
        <end position="962"/>
    </location>
</feature>
<feature type="strand" evidence="45">
    <location>
        <begin position="964"/>
        <end position="966"/>
    </location>
</feature>
<feature type="strand" evidence="45">
    <location>
        <begin position="969"/>
        <end position="971"/>
    </location>
</feature>
<feature type="strand" evidence="45">
    <location>
        <begin position="974"/>
        <end position="978"/>
    </location>
</feature>
<feature type="strand" evidence="45">
    <location>
        <begin position="990"/>
        <end position="994"/>
    </location>
</feature>
<feature type="strand" evidence="45">
    <location>
        <begin position="999"/>
        <end position="1001"/>
    </location>
</feature>
<feature type="helix" evidence="43">
    <location>
        <begin position="1007"/>
        <end position="1009"/>
    </location>
</feature>
<feature type="strand" evidence="45">
    <location>
        <begin position="1017"/>
        <end position="1024"/>
    </location>
</feature>
<feature type="strand" evidence="43">
    <location>
        <begin position="1041"/>
        <end position="1043"/>
    </location>
</feature>
<feature type="helix" evidence="45">
    <location>
        <begin position="1054"/>
        <end position="1061"/>
    </location>
</feature>
<feature type="helix" evidence="45">
    <location>
        <begin position="1066"/>
        <end position="1068"/>
    </location>
</feature>
<feature type="helix" evidence="45">
    <location>
        <begin position="1071"/>
        <end position="1073"/>
    </location>
</feature>
<feature type="strand" evidence="45">
    <location>
        <begin position="1075"/>
        <end position="1077"/>
    </location>
</feature>
<feature type="turn" evidence="45">
    <location>
        <begin position="1078"/>
        <end position="1081"/>
    </location>
</feature>
<feature type="strand" evidence="45">
    <location>
        <begin position="1082"/>
        <end position="1084"/>
    </location>
</feature>
<feature type="strand" evidence="45">
    <location>
        <begin position="1089"/>
        <end position="1096"/>
    </location>
</feature>
<feature type="helix" evidence="45">
    <location>
        <begin position="1099"/>
        <end position="1101"/>
    </location>
</feature>
<feature type="turn" evidence="45">
    <location>
        <begin position="1105"/>
        <end position="1107"/>
    </location>
</feature>
<feature type="strand" evidence="46">
    <location>
        <begin position="1111"/>
        <end position="1122"/>
    </location>
</feature>
<feature type="strand" evidence="46">
    <location>
        <begin position="1124"/>
        <end position="1139"/>
    </location>
</feature>
<feature type="strand" evidence="46">
    <location>
        <begin position="1141"/>
        <end position="1146"/>
    </location>
</feature>
<feature type="strand" evidence="46">
    <location>
        <begin position="1150"/>
        <end position="1161"/>
    </location>
</feature>
<feature type="strand" evidence="46">
    <location>
        <begin position="1166"/>
        <end position="1174"/>
    </location>
</feature>
<feature type="strand" evidence="47">
    <location>
        <begin position="1175"/>
        <end position="1177"/>
    </location>
</feature>
<feature type="strand" evidence="46">
    <location>
        <begin position="1179"/>
        <end position="1184"/>
    </location>
</feature>
<feature type="strand" evidence="46">
    <location>
        <begin position="1187"/>
        <end position="1192"/>
    </location>
</feature>
<feature type="strand" evidence="47">
    <location>
        <begin position="1202"/>
        <end position="1205"/>
    </location>
</feature>
<feature type="helix" evidence="47">
    <location>
        <begin position="1220"/>
        <end position="1252"/>
    </location>
</feature>
<sequence>MNYIPTQTFYGRRWRPRPAARPWPLQATPVAPVVPDFQAQQMQQLISAVNALTMRQNAIAPARPPKPKKKKTTKPKPKTQPKKINGKTQQQKKKDKQADKKKKKPGKRERMCMKIENDCIFEVKHEGKVTGYACLVGDKVMKPAHVKGVIDNADLAKLAFKKSSKYDLECAQIPVHMRSDASKYTHEKPEGHYNWHHGAVQYSGGRFTIPTGAGKPGDSGRPIFDNKGRVVAIVLGGANEGSRTALSVVTWNKDMVTRVTPEGSEEWSAPLITAMCVLANATFPCFQPPCVPCCYENNAEATLRMLEDNVDRPGYYDLLQAALTCRNGTRHRRSVSQHFNVYKATRPYIAYCADCGAGHSCHSPVAIEAVRSEATDGMLKIQFSAQIGIDKSDNHDYTKIRYADGHAIENAVRSSLKVATSGDCFVHGTMGHFILAKCPPGEFLQVSIQDTRNAVRACRIQYHHDPQPVGREKFTIRPHYGKEIPCTTYQQTTAETVEEIDMHMPPDTPDRTLLSQQSGNVKITVGGKKVKYNCTCGTGNVGTTNSDMTINTCLIEQCHVSVTDHKKWQFNSPFVPRADEPARKGKVHIPFPLDNITCRVPMAREPTVIHGKREVTLHLHPDHPTLFSYRTLGEDPQYHEEWVTAAVERTIPVPVDGMEYHWGNNDPVRLWSQLTTEGKPHGWPHQIVQYYYGLYPAATVSAVVGMSLLALISIFASCYMLVAARSKCLTPYALTPGAAVPWTLGILCCAPRAHAASVAETMAYLWDQNQALFWLEFAAPVACILIITYCLRNVLCCCKSLSFLVLLSLGATARAYEHSTVMPNVVGFPYKAHIERPGYSPLTLQMQVVETSLEPTLNLEYITCEYKTVVPSPYVKCCGASECSTKEKPDYQCKVYTGVYPFMWGGAYCFCDSENTQLSEAYVDRSDVCRHDHASAYKAHTASLKAKVRVMYGNVNQTVDVYVNGDHAVTIGGTQFIFGPLSSAWTPFDNKIVVYKDEVFNQDFPPYGSGQPGRFGDIQSRTVESNDLYANTALKLARPSPGMVHVPYTQTPSGFKYWLKEKGTALNTKAPFGCQIKTNPVRAMNCAVGNIPVSMNLPDSAFTRIVEAPTIIDLTCTVATCTHSSDFGGVLTLTYKTNKNGDCSVHSHSNVATLQEATAKVKTAGKVTLHFSTASASPSFVVSLCSARATCSASCEPPKDHIVPYAASHSNVVFPDMSGTALSWVQKISGGLGAFAIGAILVLVVVTCIGLRR</sequence>
<organism>
    <name type="scientific">Semliki forest virus</name>
    <name type="common">SFV</name>
    <dbReference type="NCBI Taxonomy" id="11033"/>
    <lineage>
        <taxon>Viruses</taxon>
        <taxon>Riboviria</taxon>
        <taxon>Orthornavirae</taxon>
        <taxon>Kitrinoviricota</taxon>
        <taxon>Alsuviricetes</taxon>
        <taxon>Martellivirales</taxon>
        <taxon>Togaviridae</taxon>
        <taxon>Alphavirus</taxon>
    </lineage>
</organism>